<sequence>MWLKSLTLKHFRNYQDAEINFHSGLNIFLGQNAQGKTNILESIYFLALTRSHRTRSDKDFIHFQEKDLKVSGILEKKTGTIPLDIELTAKGRITKINHLKQNRLSDYIGAMNVVLFAPEDLQLIKGSPSLRRKFIDIELGQIKPIYLADLSNYNHVLKQRNSYLKNSQNIDENFLSVLDEQLIEYGCRVVKHRLDFLKKLEIFAQEKHLDISQKKETLTIDYLSSVPLQDIDSIEESFRLSLSKNRKRDLFKQNTGVGPHRDDIAFFINQMDANYGSQGQHRSVVLSLKLAEIKLIENITKESPILLLDDVMSELDNDRQLKLLETISQEIQTFITTTTLEHLKNLPKDIKIFEISNGNIK</sequence>
<organism>
    <name type="scientific">Streptococcus gordonii (strain Challis / ATCC 35105 / BCRC 15272 / CH1 / DL1 / V288)</name>
    <dbReference type="NCBI Taxonomy" id="467705"/>
    <lineage>
        <taxon>Bacteria</taxon>
        <taxon>Bacillati</taxon>
        <taxon>Bacillota</taxon>
        <taxon>Bacilli</taxon>
        <taxon>Lactobacillales</taxon>
        <taxon>Streptococcaceae</taxon>
        <taxon>Streptococcus</taxon>
    </lineage>
</organism>
<reference key="1">
    <citation type="journal article" date="2007" name="J. Bacteriol.">
        <title>Genome-wide transcriptional changes in Streptococcus gordonii in response to competence signaling peptide.</title>
        <authorList>
            <person name="Vickerman M.M."/>
            <person name="Iobst S."/>
            <person name="Jesionowski A.M."/>
            <person name="Gill S.R."/>
        </authorList>
    </citation>
    <scope>NUCLEOTIDE SEQUENCE [LARGE SCALE GENOMIC DNA]</scope>
    <source>
        <strain>Challis / ATCC 35105 / BCRC 15272 / CH1 / DL1 / V288</strain>
    </source>
</reference>
<evidence type="ECO:0000255" key="1">
    <source>
        <dbReference type="HAMAP-Rule" id="MF_00365"/>
    </source>
</evidence>
<protein>
    <recommendedName>
        <fullName evidence="1">DNA replication and repair protein RecF</fullName>
    </recommendedName>
</protein>
<accession>A8AU71</accession>
<feature type="chain" id="PRO_1000079611" description="DNA replication and repair protein RecF">
    <location>
        <begin position="1"/>
        <end position="361"/>
    </location>
</feature>
<feature type="binding site" evidence="1">
    <location>
        <begin position="30"/>
        <end position="37"/>
    </location>
    <ligand>
        <name>ATP</name>
        <dbReference type="ChEBI" id="CHEBI:30616"/>
    </ligand>
</feature>
<dbReference type="EMBL" id="CP000725">
    <property type="protein sequence ID" value="ABV09421.1"/>
    <property type="molecule type" value="Genomic_DNA"/>
</dbReference>
<dbReference type="RefSeq" id="WP_011999564.1">
    <property type="nucleotide sequence ID" value="NC_009785.1"/>
</dbReference>
<dbReference type="SMR" id="A8AU71"/>
<dbReference type="STRING" id="467705.SGO_0009"/>
<dbReference type="KEGG" id="sgo:SGO_0009"/>
<dbReference type="eggNOG" id="COG1195">
    <property type="taxonomic scope" value="Bacteria"/>
</dbReference>
<dbReference type="HOGENOM" id="CLU_040267_0_1_9"/>
<dbReference type="Proteomes" id="UP000001131">
    <property type="component" value="Chromosome"/>
</dbReference>
<dbReference type="GO" id="GO:0005737">
    <property type="term" value="C:cytoplasm"/>
    <property type="evidence" value="ECO:0007669"/>
    <property type="project" value="UniProtKB-SubCell"/>
</dbReference>
<dbReference type="GO" id="GO:0005524">
    <property type="term" value="F:ATP binding"/>
    <property type="evidence" value="ECO:0007669"/>
    <property type="project" value="UniProtKB-UniRule"/>
</dbReference>
<dbReference type="GO" id="GO:0003697">
    <property type="term" value="F:single-stranded DNA binding"/>
    <property type="evidence" value="ECO:0007669"/>
    <property type="project" value="UniProtKB-UniRule"/>
</dbReference>
<dbReference type="GO" id="GO:0006260">
    <property type="term" value="P:DNA replication"/>
    <property type="evidence" value="ECO:0007669"/>
    <property type="project" value="UniProtKB-UniRule"/>
</dbReference>
<dbReference type="GO" id="GO:0000731">
    <property type="term" value="P:DNA synthesis involved in DNA repair"/>
    <property type="evidence" value="ECO:0007669"/>
    <property type="project" value="TreeGrafter"/>
</dbReference>
<dbReference type="GO" id="GO:0006302">
    <property type="term" value="P:double-strand break repair"/>
    <property type="evidence" value="ECO:0007669"/>
    <property type="project" value="TreeGrafter"/>
</dbReference>
<dbReference type="GO" id="GO:0009432">
    <property type="term" value="P:SOS response"/>
    <property type="evidence" value="ECO:0007669"/>
    <property type="project" value="UniProtKB-UniRule"/>
</dbReference>
<dbReference type="CDD" id="cd03242">
    <property type="entry name" value="ABC_RecF"/>
    <property type="match status" value="1"/>
</dbReference>
<dbReference type="FunFam" id="1.20.1050.90:FF:000002">
    <property type="entry name" value="DNA replication and repair protein RecF"/>
    <property type="match status" value="1"/>
</dbReference>
<dbReference type="Gene3D" id="3.40.50.300">
    <property type="entry name" value="P-loop containing nucleotide triphosphate hydrolases"/>
    <property type="match status" value="1"/>
</dbReference>
<dbReference type="Gene3D" id="1.20.1050.90">
    <property type="entry name" value="RecF/RecN/SMC, N-terminal domain"/>
    <property type="match status" value="1"/>
</dbReference>
<dbReference type="HAMAP" id="MF_00365">
    <property type="entry name" value="RecF"/>
    <property type="match status" value="1"/>
</dbReference>
<dbReference type="InterPro" id="IPR001238">
    <property type="entry name" value="DNA-binding_RecF"/>
</dbReference>
<dbReference type="InterPro" id="IPR018078">
    <property type="entry name" value="DNA-binding_RecF_CS"/>
</dbReference>
<dbReference type="InterPro" id="IPR027417">
    <property type="entry name" value="P-loop_NTPase"/>
</dbReference>
<dbReference type="InterPro" id="IPR003395">
    <property type="entry name" value="RecF/RecN/SMC_N"/>
</dbReference>
<dbReference type="InterPro" id="IPR042174">
    <property type="entry name" value="RecF_2"/>
</dbReference>
<dbReference type="NCBIfam" id="TIGR00611">
    <property type="entry name" value="recf"/>
    <property type="match status" value="1"/>
</dbReference>
<dbReference type="PANTHER" id="PTHR32182">
    <property type="entry name" value="DNA REPLICATION AND REPAIR PROTEIN RECF"/>
    <property type="match status" value="1"/>
</dbReference>
<dbReference type="PANTHER" id="PTHR32182:SF0">
    <property type="entry name" value="DNA REPLICATION AND REPAIR PROTEIN RECF"/>
    <property type="match status" value="1"/>
</dbReference>
<dbReference type="Pfam" id="PF02463">
    <property type="entry name" value="SMC_N"/>
    <property type="match status" value="1"/>
</dbReference>
<dbReference type="SUPFAM" id="SSF52540">
    <property type="entry name" value="P-loop containing nucleoside triphosphate hydrolases"/>
    <property type="match status" value="1"/>
</dbReference>
<dbReference type="PROSITE" id="PS00617">
    <property type="entry name" value="RECF_1"/>
    <property type="match status" value="1"/>
</dbReference>
<dbReference type="PROSITE" id="PS00618">
    <property type="entry name" value="RECF_2"/>
    <property type="match status" value="1"/>
</dbReference>
<proteinExistence type="inferred from homology"/>
<name>RECF_STRGC</name>
<keyword id="KW-0067">ATP-binding</keyword>
<keyword id="KW-0963">Cytoplasm</keyword>
<keyword id="KW-0227">DNA damage</keyword>
<keyword id="KW-0234">DNA repair</keyword>
<keyword id="KW-0235">DNA replication</keyword>
<keyword id="KW-0238">DNA-binding</keyword>
<keyword id="KW-0547">Nucleotide-binding</keyword>
<keyword id="KW-1185">Reference proteome</keyword>
<keyword id="KW-0742">SOS response</keyword>
<gene>
    <name evidence="1" type="primary">recF</name>
    <name type="ordered locus">SGO_0009</name>
</gene>
<comment type="function">
    <text evidence="1">The RecF protein is involved in DNA metabolism; it is required for DNA replication and normal SOS inducibility. RecF binds preferentially to single-stranded, linear DNA. It also seems to bind ATP.</text>
</comment>
<comment type="subcellular location">
    <subcellularLocation>
        <location evidence="1">Cytoplasm</location>
    </subcellularLocation>
</comment>
<comment type="similarity">
    <text evidence="1">Belongs to the RecF family.</text>
</comment>